<feature type="chain" id="PRO_0000163639" description="1-deoxy-D-xylulose 5-phosphate reductoisomerase">
    <location>
        <begin position="1"/>
        <end position="411"/>
    </location>
</feature>
<feature type="binding site" evidence="1">
    <location>
        <position position="12"/>
    </location>
    <ligand>
        <name>NADPH</name>
        <dbReference type="ChEBI" id="CHEBI:57783"/>
    </ligand>
</feature>
<feature type="binding site" evidence="1">
    <location>
        <position position="13"/>
    </location>
    <ligand>
        <name>NADPH</name>
        <dbReference type="ChEBI" id="CHEBI:57783"/>
    </ligand>
</feature>
<feature type="binding site" evidence="1">
    <location>
        <position position="14"/>
    </location>
    <ligand>
        <name>NADPH</name>
        <dbReference type="ChEBI" id="CHEBI:57783"/>
    </ligand>
</feature>
<feature type="binding site" evidence="1">
    <location>
        <position position="15"/>
    </location>
    <ligand>
        <name>NADPH</name>
        <dbReference type="ChEBI" id="CHEBI:57783"/>
    </ligand>
</feature>
<feature type="binding site" evidence="1">
    <location>
        <position position="127"/>
    </location>
    <ligand>
        <name>NADPH</name>
        <dbReference type="ChEBI" id="CHEBI:57783"/>
    </ligand>
</feature>
<feature type="binding site" evidence="1">
    <location>
        <position position="128"/>
    </location>
    <ligand>
        <name>1-deoxy-D-xylulose 5-phosphate</name>
        <dbReference type="ChEBI" id="CHEBI:57792"/>
    </ligand>
</feature>
<feature type="binding site" evidence="1">
    <location>
        <position position="129"/>
    </location>
    <ligand>
        <name>NADPH</name>
        <dbReference type="ChEBI" id="CHEBI:57783"/>
    </ligand>
</feature>
<feature type="binding site" evidence="1">
    <location>
        <position position="153"/>
    </location>
    <ligand>
        <name>Mn(2+)</name>
        <dbReference type="ChEBI" id="CHEBI:29035"/>
    </ligand>
</feature>
<feature type="binding site" evidence="1">
    <location>
        <position position="154"/>
    </location>
    <ligand>
        <name>1-deoxy-D-xylulose 5-phosphate</name>
        <dbReference type="ChEBI" id="CHEBI:57792"/>
    </ligand>
</feature>
<feature type="binding site" evidence="1">
    <location>
        <position position="155"/>
    </location>
    <ligand>
        <name>1-deoxy-D-xylulose 5-phosphate</name>
        <dbReference type="ChEBI" id="CHEBI:57792"/>
    </ligand>
</feature>
<feature type="binding site" evidence="1">
    <location>
        <position position="155"/>
    </location>
    <ligand>
        <name>Mn(2+)</name>
        <dbReference type="ChEBI" id="CHEBI:29035"/>
    </ligand>
</feature>
<feature type="binding site" evidence="1">
    <location>
        <position position="189"/>
    </location>
    <ligand>
        <name>1-deoxy-D-xylulose 5-phosphate</name>
        <dbReference type="ChEBI" id="CHEBI:57792"/>
    </ligand>
</feature>
<feature type="binding site" evidence="1">
    <location>
        <position position="212"/>
    </location>
    <ligand>
        <name>1-deoxy-D-xylulose 5-phosphate</name>
        <dbReference type="ChEBI" id="CHEBI:57792"/>
    </ligand>
</feature>
<feature type="binding site" evidence="1">
    <location>
        <position position="218"/>
    </location>
    <ligand>
        <name>NADPH</name>
        <dbReference type="ChEBI" id="CHEBI:57783"/>
    </ligand>
</feature>
<feature type="binding site" evidence="1">
    <location>
        <position position="225"/>
    </location>
    <ligand>
        <name>1-deoxy-D-xylulose 5-phosphate</name>
        <dbReference type="ChEBI" id="CHEBI:57792"/>
    </ligand>
</feature>
<feature type="binding site" evidence="1">
    <location>
        <position position="230"/>
    </location>
    <ligand>
        <name>1-deoxy-D-xylulose 5-phosphate</name>
        <dbReference type="ChEBI" id="CHEBI:57792"/>
    </ligand>
</feature>
<feature type="binding site" evidence="1">
    <location>
        <position position="231"/>
    </location>
    <ligand>
        <name>1-deoxy-D-xylulose 5-phosphate</name>
        <dbReference type="ChEBI" id="CHEBI:57792"/>
    </ligand>
</feature>
<feature type="binding site" evidence="1">
    <location>
        <position position="234"/>
    </location>
    <ligand>
        <name>1-deoxy-D-xylulose 5-phosphate</name>
        <dbReference type="ChEBI" id="CHEBI:57792"/>
    </ligand>
</feature>
<feature type="binding site" evidence="1">
    <location>
        <position position="234"/>
    </location>
    <ligand>
        <name>Mn(2+)</name>
        <dbReference type="ChEBI" id="CHEBI:29035"/>
    </ligand>
</feature>
<evidence type="ECO:0000255" key="1">
    <source>
        <dbReference type="HAMAP-Rule" id="MF_00183"/>
    </source>
</evidence>
<accession>Q485G4</accession>
<dbReference type="EC" id="1.1.1.267" evidence="1"/>
<dbReference type="EMBL" id="CP000083">
    <property type="protein sequence ID" value="AAZ26435.1"/>
    <property type="molecule type" value="Genomic_DNA"/>
</dbReference>
<dbReference type="RefSeq" id="WP_011042395.1">
    <property type="nucleotide sequence ID" value="NC_003910.7"/>
</dbReference>
<dbReference type="SMR" id="Q485G4"/>
<dbReference type="STRING" id="167879.CPS_1559"/>
<dbReference type="KEGG" id="cps:CPS_1559"/>
<dbReference type="eggNOG" id="COG0743">
    <property type="taxonomic scope" value="Bacteria"/>
</dbReference>
<dbReference type="HOGENOM" id="CLU_035714_4_0_6"/>
<dbReference type="UniPathway" id="UPA00056">
    <property type="reaction ID" value="UER00092"/>
</dbReference>
<dbReference type="Proteomes" id="UP000000547">
    <property type="component" value="Chromosome"/>
</dbReference>
<dbReference type="GO" id="GO:0030604">
    <property type="term" value="F:1-deoxy-D-xylulose-5-phosphate reductoisomerase activity"/>
    <property type="evidence" value="ECO:0007669"/>
    <property type="project" value="UniProtKB-UniRule"/>
</dbReference>
<dbReference type="GO" id="GO:0030145">
    <property type="term" value="F:manganese ion binding"/>
    <property type="evidence" value="ECO:0007669"/>
    <property type="project" value="TreeGrafter"/>
</dbReference>
<dbReference type="GO" id="GO:0070402">
    <property type="term" value="F:NADPH binding"/>
    <property type="evidence" value="ECO:0007669"/>
    <property type="project" value="InterPro"/>
</dbReference>
<dbReference type="GO" id="GO:0051484">
    <property type="term" value="P:isopentenyl diphosphate biosynthetic process, methylerythritol 4-phosphate pathway involved in terpenoid biosynthetic process"/>
    <property type="evidence" value="ECO:0007669"/>
    <property type="project" value="TreeGrafter"/>
</dbReference>
<dbReference type="FunFam" id="1.10.1740.10:FF:000004">
    <property type="entry name" value="1-deoxy-D-xylulose 5-phosphate reductoisomerase"/>
    <property type="match status" value="1"/>
</dbReference>
<dbReference type="FunFam" id="3.40.50.720:FF:000045">
    <property type="entry name" value="1-deoxy-D-xylulose 5-phosphate reductoisomerase"/>
    <property type="match status" value="1"/>
</dbReference>
<dbReference type="Gene3D" id="1.10.1740.10">
    <property type="match status" value="1"/>
</dbReference>
<dbReference type="Gene3D" id="3.40.50.720">
    <property type="entry name" value="NAD(P)-binding Rossmann-like Domain"/>
    <property type="match status" value="1"/>
</dbReference>
<dbReference type="HAMAP" id="MF_00183">
    <property type="entry name" value="DXP_reductoisom"/>
    <property type="match status" value="1"/>
</dbReference>
<dbReference type="InterPro" id="IPR003821">
    <property type="entry name" value="DXP_reductoisomerase"/>
</dbReference>
<dbReference type="InterPro" id="IPR013644">
    <property type="entry name" value="DXP_reductoisomerase_C"/>
</dbReference>
<dbReference type="InterPro" id="IPR013512">
    <property type="entry name" value="DXP_reductoisomerase_N"/>
</dbReference>
<dbReference type="InterPro" id="IPR026877">
    <property type="entry name" value="DXPR_C"/>
</dbReference>
<dbReference type="InterPro" id="IPR036169">
    <property type="entry name" value="DXPR_C_sf"/>
</dbReference>
<dbReference type="InterPro" id="IPR036291">
    <property type="entry name" value="NAD(P)-bd_dom_sf"/>
</dbReference>
<dbReference type="NCBIfam" id="TIGR00243">
    <property type="entry name" value="Dxr"/>
    <property type="match status" value="1"/>
</dbReference>
<dbReference type="NCBIfam" id="NF003938">
    <property type="entry name" value="PRK05447.1-1"/>
    <property type="match status" value="1"/>
</dbReference>
<dbReference type="NCBIfam" id="NF009114">
    <property type="entry name" value="PRK12464.1"/>
    <property type="match status" value="1"/>
</dbReference>
<dbReference type="PANTHER" id="PTHR30525">
    <property type="entry name" value="1-DEOXY-D-XYLULOSE 5-PHOSPHATE REDUCTOISOMERASE"/>
    <property type="match status" value="1"/>
</dbReference>
<dbReference type="PANTHER" id="PTHR30525:SF0">
    <property type="entry name" value="1-DEOXY-D-XYLULOSE 5-PHOSPHATE REDUCTOISOMERASE, CHLOROPLASTIC"/>
    <property type="match status" value="1"/>
</dbReference>
<dbReference type="Pfam" id="PF08436">
    <property type="entry name" value="DXP_redisom_C"/>
    <property type="match status" value="1"/>
</dbReference>
<dbReference type="Pfam" id="PF02670">
    <property type="entry name" value="DXP_reductoisom"/>
    <property type="match status" value="1"/>
</dbReference>
<dbReference type="Pfam" id="PF13288">
    <property type="entry name" value="DXPR_C"/>
    <property type="match status" value="1"/>
</dbReference>
<dbReference type="PIRSF" id="PIRSF006205">
    <property type="entry name" value="Dxp_reductismrs"/>
    <property type="match status" value="1"/>
</dbReference>
<dbReference type="SUPFAM" id="SSF69055">
    <property type="entry name" value="1-deoxy-D-xylulose-5-phosphate reductoisomerase, C-terminal domain"/>
    <property type="match status" value="1"/>
</dbReference>
<dbReference type="SUPFAM" id="SSF55347">
    <property type="entry name" value="Glyceraldehyde-3-phosphate dehydrogenase-like, C-terminal domain"/>
    <property type="match status" value="1"/>
</dbReference>
<dbReference type="SUPFAM" id="SSF51735">
    <property type="entry name" value="NAD(P)-binding Rossmann-fold domains"/>
    <property type="match status" value="1"/>
</dbReference>
<comment type="function">
    <text evidence="1">Catalyzes the NADPH-dependent rearrangement and reduction of 1-deoxy-D-xylulose-5-phosphate (DXP) to 2-C-methyl-D-erythritol 4-phosphate (MEP).</text>
</comment>
<comment type="catalytic activity">
    <reaction evidence="1">
        <text>2-C-methyl-D-erythritol 4-phosphate + NADP(+) = 1-deoxy-D-xylulose 5-phosphate + NADPH + H(+)</text>
        <dbReference type="Rhea" id="RHEA:13717"/>
        <dbReference type="ChEBI" id="CHEBI:15378"/>
        <dbReference type="ChEBI" id="CHEBI:57783"/>
        <dbReference type="ChEBI" id="CHEBI:57792"/>
        <dbReference type="ChEBI" id="CHEBI:58262"/>
        <dbReference type="ChEBI" id="CHEBI:58349"/>
        <dbReference type="EC" id="1.1.1.267"/>
    </reaction>
    <physiologicalReaction direction="right-to-left" evidence="1">
        <dbReference type="Rhea" id="RHEA:13719"/>
    </physiologicalReaction>
</comment>
<comment type="cofactor">
    <cofactor evidence="1">
        <name>Mg(2+)</name>
        <dbReference type="ChEBI" id="CHEBI:18420"/>
    </cofactor>
    <cofactor evidence="1">
        <name>Mn(2+)</name>
        <dbReference type="ChEBI" id="CHEBI:29035"/>
    </cofactor>
</comment>
<comment type="pathway">
    <text evidence="1">Isoprenoid biosynthesis; isopentenyl diphosphate biosynthesis via DXP pathway; isopentenyl diphosphate from 1-deoxy-D-xylulose 5-phosphate: step 1/6.</text>
</comment>
<comment type="similarity">
    <text evidence="1">Belongs to the DXR family.</text>
</comment>
<reference key="1">
    <citation type="journal article" date="2005" name="Proc. Natl. Acad. Sci. U.S.A.">
        <title>The psychrophilic lifestyle as revealed by the genome sequence of Colwellia psychrerythraea 34H through genomic and proteomic analyses.</title>
        <authorList>
            <person name="Methe B.A."/>
            <person name="Nelson K.E."/>
            <person name="Deming J.W."/>
            <person name="Momen B."/>
            <person name="Melamud E."/>
            <person name="Zhang X."/>
            <person name="Moult J."/>
            <person name="Madupu R."/>
            <person name="Nelson W.C."/>
            <person name="Dodson R.J."/>
            <person name="Brinkac L.M."/>
            <person name="Daugherty S.C."/>
            <person name="Durkin A.S."/>
            <person name="DeBoy R.T."/>
            <person name="Kolonay J.F."/>
            <person name="Sullivan S.A."/>
            <person name="Zhou L."/>
            <person name="Davidsen T.M."/>
            <person name="Wu M."/>
            <person name="Huston A.L."/>
            <person name="Lewis M."/>
            <person name="Weaver B."/>
            <person name="Weidman J.F."/>
            <person name="Khouri H."/>
            <person name="Utterback T.R."/>
            <person name="Feldblyum T.V."/>
            <person name="Fraser C.M."/>
        </authorList>
    </citation>
    <scope>NUCLEOTIDE SEQUENCE [LARGE SCALE GENOMIC DNA]</scope>
    <source>
        <strain>34H / ATCC BAA-681</strain>
    </source>
</reference>
<name>DXR_COLP3</name>
<organism>
    <name type="scientific">Colwellia psychrerythraea (strain 34H / ATCC BAA-681)</name>
    <name type="common">Vibrio psychroerythus</name>
    <dbReference type="NCBI Taxonomy" id="167879"/>
    <lineage>
        <taxon>Bacteria</taxon>
        <taxon>Pseudomonadati</taxon>
        <taxon>Pseudomonadota</taxon>
        <taxon>Gammaproteobacteria</taxon>
        <taxon>Alteromonadales</taxon>
        <taxon>Colwelliaceae</taxon>
        <taxon>Colwellia</taxon>
    </lineage>
</organism>
<gene>
    <name evidence="1" type="primary">dxr</name>
    <name type="ordered locus">CPS_1559</name>
</gene>
<proteinExistence type="inferred from homology"/>
<protein>
    <recommendedName>
        <fullName evidence="1">1-deoxy-D-xylulose 5-phosphate reductoisomerase</fullName>
        <shortName evidence="1">DXP reductoisomerase</shortName>
        <ecNumber evidence="1">1.1.1.267</ecNumber>
    </recommendedName>
    <alternativeName>
        <fullName evidence="1">1-deoxyxylulose-5-phosphate reductoisomerase</fullName>
    </alternativeName>
    <alternativeName>
        <fullName evidence="1">2-C-methyl-D-erythritol 4-phosphate synthase</fullName>
    </alternativeName>
</protein>
<sequence>MSKRQLCILGSTGSIGCSTLDVVRLHPERFQVISLAAYTSVDVIFEQCIEFKPQQVVLVSSEHAALLTQKLNDANVSNITVLSGEQALIDIAECQNSDTVMASIVGASGLLPTLAAVNAGKRVLLANKEALVTSGAIFMAAVKASGAELLPIDSEHNAIFQCLPSQQQAEIGECQLLANGISKILLTGSGGPFRTRAIDTLESVTPSQACAHPNWDMGRKISVDSATMMNKGLEFIEAKWLFNVEAEDIQVVLHPQSTIHSMVQYKDGSVIAQMGNPDMRTPIAHALSFPERIESGVAPLDFFNTPSFEFQPVDFERYPNLELAIEACKQGQAACTALNAANEIAVAAFLDEKIKFTDIYKINETSVKKFVSQKVDNINEVIALDEQARSFAQTLLADFLQTEALSQKGNK</sequence>
<keyword id="KW-0414">Isoprene biosynthesis</keyword>
<keyword id="KW-0464">Manganese</keyword>
<keyword id="KW-0479">Metal-binding</keyword>
<keyword id="KW-0521">NADP</keyword>
<keyword id="KW-0560">Oxidoreductase</keyword>